<accession>Q7Y1L9</accession>
<accession>A0A0N7KHG0</accession>
<accession>C7IZR2</accession>
<sequence length="116" mass="11189">MSRGGSAGGGQSSLGYLFGGNEAPKPAAKPAPAAAPAPAPAPAPAAAVAAPAEKPSPAKADATKQIPAGIQGSRSNNNYHRADGQNTGNFLTDRPSTKVHAAPGGGSSLGYLFGGN</sequence>
<comment type="function">
    <text evidence="1">Acts in maintaining the cortical microtubules organization essential for anisotropic cell growth.</text>
</comment>
<comment type="similarity">
    <text evidence="3">Belongs to the SPIRAL1 family.</text>
</comment>
<comment type="sequence caution" evidence="3">
    <conflict type="erroneous gene model prediction">
        <sequence resource="EMBL-CDS" id="BAH92201"/>
    </conflict>
</comment>
<gene>
    <name type="ordered locus">Os03g0417800</name>
    <name type="ordered locus">LOC_Os03g30430</name>
    <name type="ORF">OsJ_11276</name>
    <name type="ORF">OSJNBb0056B16.13</name>
</gene>
<protein>
    <recommendedName>
        <fullName>Protein SPIRAL1-like 1</fullName>
    </recommendedName>
</protein>
<evidence type="ECO:0000250" key="1"/>
<evidence type="ECO:0000256" key="2">
    <source>
        <dbReference type="SAM" id="MobiDB-lite"/>
    </source>
</evidence>
<evidence type="ECO:0000305" key="3"/>
<reference key="1">
    <citation type="journal article" date="2005" name="Genome Res.">
        <title>Sequence, annotation, and analysis of synteny between rice chromosome 3 and diverged grass species.</title>
        <authorList>
            <consortium name="The rice chromosome 3 sequencing consortium"/>
            <person name="Buell C.R."/>
            <person name="Yuan Q."/>
            <person name="Ouyang S."/>
            <person name="Liu J."/>
            <person name="Zhu W."/>
            <person name="Wang A."/>
            <person name="Maiti R."/>
            <person name="Haas B."/>
            <person name="Wortman J."/>
            <person name="Pertea M."/>
            <person name="Jones K.M."/>
            <person name="Kim M."/>
            <person name="Overton L."/>
            <person name="Tsitrin T."/>
            <person name="Fadrosh D."/>
            <person name="Bera J."/>
            <person name="Weaver B."/>
            <person name="Jin S."/>
            <person name="Johri S."/>
            <person name="Reardon M."/>
            <person name="Webb K."/>
            <person name="Hill J."/>
            <person name="Moffat K."/>
            <person name="Tallon L."/>
            <person name="Van Aken S."/>
            <person name="Lewis M."/>
            <person name="Utterback T."/>
            <person name="Feldblyum T."/>
            <person name="Zismann V."/>
            <person name="Iobst S."/>
            <person name="Hsiao J."/>
            <person name="de Vazeille A.R."/>
            <person name="Salzberg S.L."/>
            <person name="White O."/>
            <person name="Fraser C.M."/>
            <person name="Yu Y."/>
            <person name="Kim H."/>
            <person name="Rambo T."/>
            <person name="Currie J."/>
            <person name="Collura K."/>
            <person name="Kernodle-Thompson S."/>
            <person name="Wei F."/>
            <person name="Kudrna K."/>
            <person name="Ammiraju J.S.S."/>
            <person name="Luo M."/>
            <person name="Goicoechea J.L."/>
            <person name="Wing R.A."/>
            <person name="Henry D."/>
            <person name="Oates R."/>
            <person name="Palmer M."/>
            <person name="Pries G."/>
            <person name="Saski C."/>
            <person name="Simmons J."/>
            <person name="Soderlund C."/>
            <person name="Nelson W."/>
            <person name="de la Bastide M."/>
            <person name="Spiegel L."/>
            <person name="Nascimento L."/>
            <person name="Huang E."/>
            <person name="Preston R."/>
            <person name="Zutavern T."/>
            <person name="Palmer L."/>
            <person name="O'Shaughnessy A."/>
            <person name="Dike S."/>
            <person name="McCombie W.R."/>
            <person name="Minx P."/>
            <person name="Cordum H."/>
            <person name="Wilson R."/>
            <person name="Jin W."/>
            <person name="Lee H.R."/>
            <person name="Jiang J."/>
            <person name="Jackson S."/>
        </authorList>
    </citation>
    <scope>NUCLEOTIDE SEQUENCE [LARGE SCALE GENOMIC DNA]</scope>
    <source>
        <strain>cv. Nipponbare</strain>
    </source>
</reference>
<reference key="2">
    <citation type="journal article" date="2005" name="Nature">
        <title>The map-based sequence of the rice genome.</title>
        <authorList>
            <consortium name="International rice genome sequencing project (IRGSP)"/>
        </authorList>
    </citation>
    <scope>NUCLEOTIDE SEQUENCE [LARGE SCALE GENOMIC DNA]</scope>
    <source>
        <strain>cv. Nipponbare</strain>
    </source>
</reference>
<reference key="3">
    <citation type="journal article" date="2008" name="Nucleic Acids Res.">
        <title>The rice annotation project database (RAP-DB): 2008 update.</title>
        <authorList>
            <consortium name="The rice annotation project (RAP)"/>
        </authorList>
    </citation>
    <scope>GENOME REANNOTATION</scope>
    <source>
        <strain>cv. Nipponbare</strain>
    </source>
</reference>
<reference key="4">
    <citation type="journal article" date="2013" name="Rice">
        <title>Improvement of the Oryza sativa Nipponbare reference genome using next generation sequence and optical map data.</title>
        <authorList>
            <person name="Kawahara Y."/>
            <person name="de la Bastide M."/>
            <person name="Hamilton J.P."/>
            <person name="Kanamori H."/>
            <person name="McCombie W.R."/>
            <person name="Ouyang S."/>
            <person name="Schwartz D.C."/>
            <person name="Tanaka T."/>
            <person name="Wu J."/>
            <person name="Zhou S."/>
            <person name="Childs K.L."/>
            <person name="Davidson R.M."/>
            <person name="Lin H."/>
            <person name="Quesada-Ocampo L."/>
            <person name="Vaillancourt B."/>
            <person name="Sakai H."/>
            <person name="Lee S.S."/>
            <person name="Kim J."/>
            <person name="Numa H."/>
            <person name="Itoh T."/>
            <person name="Buell C.R."/>
            <person name="Matsumoto T."/>
        </authorList>
    </citation>
    <scope>GENOME REANNOTATION</scope>
    <source>
        <strain>cv. Nipponbare</strain>
    </source>
</reference>
<reference key="5">
    <citation type="journal article" date="2005" name="PLoS Biol.">
        <title>The genomes of Oryza sativa: a history of duplications.</title>
        <authorList>
            <person name="Yu J."/>
            <person name="Wang J."/>
            <person name="Lin W."/>
            <person name="Li S."/>
            <person name="Li H."/>
            <person name="Zhou J."/>
            <person name="Ni P."/>
            <person name="Dong W."/>
            <person name="Hu S."/>
            <person name="Zeng C."/>
            <person name="Zhang J."/>
            <person name="Zhang Y."/>
            <person name="Li R."/>
            <person name="Xu Z."/>
            <person name="Li S."/>
            <person name="Li X."/>
            <person name="Zheng H."/>
            <person name="Cong L."/>
            <person name="Lin L."/>
            <person name="Yin J."/>
            <person name="Geng J."/>
            <person name="Li G."/>
            <person name="Shi J."/>
            <person name="Liu J."/>
            <person name="Lv H."/>
            <person name="Li J."/>
            <person name="Wang J."/>
            <person name="Deng Y."/>
            <person name="Ran L."/>
            <person name="Shi X."/>
            <person name="Wang X."/>
            <person name="Wu Q."/>
            <person name="Li C."/>
            <person name="Ren X."/>
            <person name="Wang J."/>
            <person name="Wang X."/>
            <person name="Li D."/>
            <person name="Liu D."/>
            <person name="Zhang X."/>
            <person name="Ji Z."/>
            <person name="Zhao W."/>
            <person name="Sun Y."/>
            <person name="Zhang Z."/>
            <person name="Bao J."/>
            <person name="Han Y."/>
            <person name="Dong L."/>
            <person name="Ji J."/>
            <person name="Chen P."/>
            <person name="Wu S."/>
            <person name="Liu J."/>
            <person name="Xiao Y."/>
            <person name="Bu D."/>
            <person name="Tan J."/>
            <person name="Yang L."/>
            <person name="Ye C."/>
            <person name="Zhang J."/>
            <person name="Xu J."/>
            <person name="Zhou Y."/>
            <person name="Yu Y."/>
            <person name="Zhang B."/>
            <person name="Zhuang S."/>
            <person name="Wei H."/>
            <person name="Liu B."/>
            <person name="Lei M."/>
            <person name="Yu H."/>
            <person name="Li Y."/>
            <person name="Xu H."/>
            <person name="Wei S."/>
            <person name="He X."/>
            <person name="Fang L."/>
            <person name="Zhang Z."/>
            <person name="Zhang Y."/>
            <person name="Huang X."/>
            <person name="Su Z."/>
            <person name="Tong W."/>
            <person name="Li J."/>
            <person name="Tong Z."/>
            <person name="Li S."/>
            <person name="Ye J."/>
            <person name="Wang L."/>
            <person name="Fang L."/>
            <person name="Lei T."/>
            <person name="Chen C.-S."/>
            <person name="Chen H.-C."/>
            <person name="Xu Z."/>
            <person name="Li H."/>
            <person name="Huang H."/>
            <person name="Zhang F."/>
            <person name="Xu H."/>
            <person name="Li N."/>
            <person name="Zhao C."/>
            <person name="Li S."/>
            <person name="Dong L."/>
            <person name="Huang Y."/>
            <person name="Li L."/>
            <person name="Xi Y."/>
            <person name="Qi Q."/>
            <person name="Li W."/>
            <person name="Zhang B."/>
            <person name="Hu W."/>
            <person name="Zhang Y."/>
            <person name="Tian X."/>
            <person name="Jiao Y."/>
            <person name="Liang X."/>
            <person name="Jin J."/>
            <person name="Gao L."/>
            <person name="Zheng W."/>
            <person name="Hao B."/>
            <person name="Liu S.-M."/>
            <person name="Wang W."/>
            <person name="Yuan L."/>
            <person name="Cao M."/>
            <person name="McDermott J."/>
            <person name="Samudrala R."/>
            <person name="Wang J."/>
            <person name="Wong G.K.-S."/>
            <person name="Yang H."/>
        </authorList>
    </citation>
    <scope>NUCLEOTIDE SEQUENCE [LARGE SCALE GENOMIC DNA]</scope>
    <source>
        <strain>cv. Nipponbare</strain>
    </source>
</reference>
<reference key="6">
    <citation type="journal article" date="2003" name="Science">
        <title>Collection, mapping, and annotation of over 28,000 cDNA clones from japonica rice.</title>
        <authorList>
            <consortium name="The rice full-length cDNA consortium"/>
        </authorList>
    </citation>
    <scope>NUCLEOTIDE SEQUENCE [LARGE SCALE MRNA]</scope>
    <source>
        <strain>cv. Nipponbare</strain>
    </source>
</reference>
<name>SP1L1_ORYSJ</name>
<dbReference type="EMBL" id="AC137992">
    <property type="protein sequence ID" value="AAP44613.1"/>
    <property type="molecule type" value="Genomic_DNA"/>
</dbReference>
<dbReference type="EMBL" id="DP000009">
    <property type="protein sequence ID" value="ABF96634.1"/>
    <property type="molecule type" value="Genomic_DNA"/>
</dbReference>
<dbReference type="EMBL" id="DP000009">
    <property type="protein sequence ID" value="ABF96635.1"/>
    <property type="molecule type" value="Genomic_DNA"/>
</dbReference>
<dbReference type="EMBL" id="AP008209">
    <property type="protein sequence ID" value="BAH92201.1"/>
    <property type="status" value="ALT_SEQ"/>
    <property type="molecule type" value="Genomic_DNA"/>
</dbReference>
<dbReference type="EMBL" id="AP014959">
    <property type="protein sequence ID" value="BAS84713.1"/>
    <property type="molecule type" value="Genomic_DNA"/>
</dbReference>
<dbReference type="EMBL" id="CM000140">
    <property type="protein sequence ID" value="EAZ27335.1"/>
    <property type="molecule type" value="Genomic_DNA"/>
</dbReference>
<dbReference type="EMBL" id="AK121654">
    <property type="protein sequence ID" value="BAH00594.1"/>
    <property type="molecule type" value="mRNA"/>
</dbReference>
<dbReference type="RefSeq" id="XP_015632789.1">
    <property type="nucleotide sequence ID" value="XM_015777303.1"/>
</dbReference>
<dbReference type="STRING" id="39947.Q7Y1L9"/>
<dbReference type="PaxDb" id="39947-Q7Y1L9"/>
<dbReference type="EnsemblPlants" id="Os03t0417800-01">
    <property type="protein sequence ID" value="Os03t0417800-01"/>
    <property type="gene ID" value="Os03g0417800"/>
</dbReference>
<dbReference type="Gramene" id="Os03t0417800-01">
    <property type="protein sequence ID" value="Os03t0417800-01"/>
    <property type="gene ID" value="Os03g0417800"/>
</dbReference>
<dbReference type="KEGG" id="dosa:Os03g0417800"/>
<dbReference type="eggNOG" id="ENOG502S4KK">
    <property type="taxonomic scope" value="Eukaryota"/>
</dbReference>
<dbReference type="HOGENOM" id="CLU_129558_0_0_1"/>
<dbReference type="InParanoid" id="Q7Y1L9"/>
<dbReference type="OMA" id="KLENMGR"/>
<dbReference type="OrthoDB" id="62622at2759"/>
<dbReference type="Proteomes" id="UP000000763">
    <property type="component" value="Chromosome 3"/>
</dbReference>
<dbReference type="Proteomes" id="UP000007752">
    <property type="component" value="Chromosome 3"/>
</dbReference>
<dbReference type="Proteomes" id="UP000059680">
    <property type="component" value="Chromosome 3"/>
</dbReference>
<dbReference type="ExpressionAtlas" id="Q7Y1L9">
    <property type="expression patterns" value="baseline and differential"/>
</dbReference>
<dbReference type="GO" id="GO:0010005">
    <property type="term" value="C:cortical microtubule, transverse to long axis"/>
    <property type="evidence" value="ECO:0000318"/>
    <property type="project" value="GO_Central"/>
</dbReference>
<dbReference type="GO" id="GO:0043622">
    <property type="term" value="P:cortical microtubule organization"/>
    <property type="evidence" value="ECO:0000318"/>
    <property type="project" value="GO_Central"/>
</dbReference>
<dbReference type="InterPro" id="IPR039613">
    <property type="entry name" value="SPR1/2/3/4/5"/>
</dbReference>
<dbReference type="PANTHER" id="PTHR33403:SF48">
    <property type="entry name" value="PROTEIN SPIRAL1-LIKE 1"/>
    <property type="match status" value="1"/>
</dbReference>
<dbReference type="PANTHER" id="PTHR33403">
    <property type="entry name" value="SPR1"/>
    <property type="match status" value="1"/>
</dbReference>
<feature type="chain" id="PRO_0000417964" description="Protein SPIRAL1-like 1">
    <location>
        <begin position="1"/>
        <end position="116"/>
    </location>
</feature>
<feature type="region of interest" description="Disordered" evidence="2">
    <location>
        <begin position="1"/>
        <end position="116"/>
    </location>
</feature>
<feature type="compositionally biased region" description="Gly residues" evidence="2">
    <location>
        <begin position="1"/>
        <end position="12"/>
    </location>
</feature>
<feature type="compositionally biased region" description="Pro residues" evidence="2">
    <location>
        <begin position="27"/>
        <end position="43"/>
    </location>
</feature>
<feature type="compositionally biased region" description="Low complexity" evidence="2">
    <location>
        <begin position="44"/>
        <end position="60"/>
    </location>
</feature>
<feature type="compositionally biased region" description="Polar residues" evidence="2">
    <location>
        <begin position="72"/>
        <end position="90"/>
    </location>
</feature>
<feature type="compositionally biased region" description="Gly residues" evidence="2">
    <location>
        <begin position="103"/>
        <end position="116"/>
    </location>
</feature>
<proteinExistence type="inferred from homology"/>
<keyword id="KW-0493">Microtubule</keyword>
<keyword id="KW-1185">Reference proteome</keyword>
<organism>
    <name type="scientific">Oryza sativa subsp. japonica</name>
    <name type="common">Rice</name>
    <dbReference type="NCBI Taxonomy" id="39947"/>
    <lineage>
        <taxon>Eukaryota</taxon>
        <taxon>Viridiplantae</taxon>
        <taxon>Streptophyta</taxon>
        <taxon>Embryophyta</taxon>
        <taxon>Tracheophyta</taxon>
        <taxon>Spermatophyta</taxon>
        <taxon>Magnoliopsida</taxon>
        <taxon>Liliopsida</taxon>
        <taxon>Poales</taxon>
        <taxon>Poaceae</taxon>
        <taxon>BOP clade</taxon>
        <taxon>Oryzoideae</taxon>
        <taxon>Oryzeae</taxon>
        <taxon>Oryzinae</taxon>
        <taxon>Oryza</taxon>
        <taxon>Oryza sativa</taxon>
    </lineage>
</organism>